<proteinExistence type="evidence at protein level"/>
<gene>
    <name evidence="4" type="primary">Vipr2</name>
</gene>
<feature type="signal peptide" evidence="2">
    <location>
        <begin position="1"/>
        <end position="22"/>
    </location>
</feature>
<feature type="chain" id="PRO_0000012861" description="Vasoactive intestinal polypeptide receptor 2">
    <location>
        <begin position="23"/>
        <end position="437"/>
    </location>
</feature>
<feature type="topological domain" description="Extracellular" evidence="3">
    <location>
        <begin position="23"/>
        <end position="123"/>
    </location>
</feature>
<feature type="transmembrane region" description="Helical; Name=1" evidence="1">
    <location>
        <begin position="124"/>
        <end position="149"/>
    </location>
</feature>
<feature type="topological domain" description="Cytoplasmic" evidence="3">
    <location>
        <begin position="150"/>
        <end position="157"/>
    </location>
</feature>
<feature type="transmembrane region" description="Helical; Name=2" evidence="1">
    <location>
        <begin position="158"/>
        <end position="179"/>
    </location>
</feature>
<feature type="topological domain" description="Extracellular" evidence="3">
    <location>
        <begin position="180"/>
        <end position="202"/>
    </location>
</feature>
<feature type="transmembrane region" description="Helical; Name=3" evidence="1">
    <location>
        <begin position="203"/>
        <end position="227"/>
    </location>
</feature>
<feature type="topological domain" description="Cytoplasmic" evidence="3">
    <location>
        <begin position="228"/>
        <end position="238"/>
    </location>
</feature>
<feature type="transmembrane region" description="Helical; Name=4" evidence="1">
    <location>
        <begin position="239"/>
        <end position="260"/>
    </location>
</feature>
<feature type="topological domain" description="Extracellular" evidence="3">
    <location>
        <begin position="261"/>
        <end position="279"/>
    </location>
</feature>
<feature type="transmembrane region" description="Helical; Name=5" evidence="1">
    <location>
        <begin position="280"/>
        <end position="303"/>
    </location>
</feature>
<feature type="topological domain" description="Cytoplasmic" evidence="3">
    <location>
        <begin position="304"/>
        <end position="324"/>
    </location>
</feature>
<feature type="transmembrane region" description="Helical; Name=6" evidence="1">
    <location>
        <begin position="325"/>
        <end position="345"/>
    </location>
</feature>
<feature type="topological domain" description="Extracellular" evidence="3">
    <location>
        <begin position="346"/>
        <end position="353"/>
    </location>
</feature>
<feature type="transmembrane region" description="Helical; Name=7" evidence="1">
    <location>
        <begin position="354"/>
        <end position="377"/>
    </location>
</feature>
<feature type="topological domain" description="Cytoplasmic" evidence="3">
    <location>
        <begin position="378"/>
        <end position="437"/>
    </location>
</feature>
<feature type="glycosylation site" description="N-linked (GlcNAc...) asparagine" evidence="2">
    <location>
        <position position="57"/>
    </location>
</feature>
<feature type="glycosylation site" description="N-linked (GlcNAc...) asparagine" evidence="2">
    <location>
        <position position="87"/>
    </location>
</feature>
<feature type="glycosylation site" description="N-linked (GlcNAc...) asparagine" evidence="2">
    <location>
        <position position="91"/>
    </location>
</feature>
<feature type="disulfide bond" evidence="1">
    <location>
        <begin position="37"/>
        <end position="60"/>
    </location>
</feature>
<feature type="disulfide bond" evidence="1">
    <location>
        <begin position="51"/>
        <end position="92"/>
    </location>
</feature>
<feature type="disulfide bond" evidence="1">
    <location>
        <begin position="74"/>
        <end position="108"/>
    </location>
</feature>
<feature type="disulfide bond" evidence="1">
    <location>
        <begin position="201"/>
        <end position="270"/>
    </location>
</feature>
<feature type="sequence conflict" description="In Ref. 2; AAN86758." evidence="3" ref="2">
    <original>A</original>
    <variation>P</variation>
    <location>
        <position position="397"/>
    </location>
</feature>
<protein>
    <recommendedName>
        <fullName>Vasoactive intestinal polypeptide receptor 2</fullName>
        <shortName>VIP-R-2</shortName>
    </recommendedName>
    <alternativeName>
        <fullName>Pituitary adenylate cyclase-activating polypeptide type III receptor</fullName>
        <shortName>PACAP type III receptor</shortName>
        <shortName>PACAP-R-3</shortName>
        <shortName>PACAP-R3</shortName>
    </alternativeName>
</protein>
<sequence>MRASVVLTCYCWLLVRVSSIHPECRFHLEIQEEETKCAELLSSQTENQRACSGVWDNITCWRPADVGETVTVPCPKVFSNFYSRPGNISKNCTSDGWSETFPDFIDACGYNDPEDESKISFYILVKAIYTLGYSVSLMSLTTGSIIICLFRKLHCTRNYIHLNLFLSFMLRAISVLVKDSVLYSSSGLLRCHDQPASWVGCKLSLVFFQYCIMANFYWLLVEGLYLHTLLVAILPPSRCFLAYLLIGWGIPSVCIGAWTATRLSLEDTGCWDTNDHSIPWWVIRMPILISIVVNFALFISIVRILLQKLTSPDVGGNDQSQYKRLAKSTLLLIPLFGVHYMVFAAFPIGISSTYQILFELCVGSFQGLVVAVLYCFLNSEVQCELKRRWRGLCLTQAGSRDYRLHSWSMSRNGSESALQIHRGSRTQSFLQSETSVI</sequence>
<name>VIPR2_MOUSE</name>
<evidence type="ECO:0000250" key="1">
    <source>
        <dbReference type="UniProtKB" id="P41587"/>
    </source>
</evidence>
<evidence type="ECO:0000255" key="2"/>
<evidence type="ECO:0000305" key="3"/>
<evidence type="ECO:0000312" key="4">
    <source>
        <dbReference type="MGI" id="MGI:107166"/>
    </source>
</evidence>
<accession>P41588</accession>
<accession>P97750</accession>
<dbReference type="EMBL" id="D28132">
    <property type="protein sequence ID" value="BAA05674.1"/>
    <property type="molecule type" value="mRNA"/>
</dbReference>
<dbReference type="EMBL" id="S82966">
    <property type="protein sequence ID" value="AAN86758.1"/>
    <property type="molecule type" value="Genomic_DNA"/>
</dbReference>
<dbReference type="CCDS" id="CCDS26210.1"/>
<dbReference type="PIR" id="A53471">
    <property type="entry name" value="JU0185"/>
</dbReference>
<dbReference type="RefSeq" id="NP_033537.1">
    <property type="nucleotide sequence ID" value="NM_009511.2"/>
</dbReference>
<dbReference type="SMR" id="P41588"/>
<dbReference type="FunCoup" id="P41588">
    <property type="interactions" value="1203"/>
</dbReference>
<dbReference type="STRING" id="10090.ENSMUSP00000011315"/>
<dbReference type="GlyCosmos" id="P41588">
    <property type="glycosylation" value="3 sites, No reported glycans"/>
</dbReference>
<dbReference type="GlyGen" id="P41588">
    <property type="glycosylation" value="3 sites"/>
</dbReference>
<dbReference type="iPTMnet" id="P41588"/>
<dbReference type="PhosphoSitePlus" id="P41588"/>
<dbReference type="SwissPalm" id="P41588"/>
<dbReference type="PaxDb" id="10090-ENSMUSP00000011315"/>
<dbReference type="ProteomicsDB" id="300169"/>
<dbReference type="Antibodypedia" id="18979">
    <property type="antibodies" value="332 antibodies from 36 providers"/>
</dbReference>
<dbReference type="DNASU" id="22355"/>
<dbReference type="Ensembl" id="ENSMUST00000011315.10">
    <property type="protein sequence ID" value="ENSMUSP00000011315.4"/>
    <property type="gene ID" value="ENSMUSG00000011171.12"/>
</dbReference>
<dbReference type="GeneID" id="22355"/>
<dbReference type="KEGG" id="mmu:22355"/>
<dbReference type="UCSC" id="uc007phe.2">
    <property type="organism name" value="mouse"/>
</dbReference>
<dbReference type="AGR" id="MGI:107166"/>
<dbReference type="CTD" id="7434"/>
<dbReference type="MGI" id="MGI:107166">
    <property type="gene designation" value="Vipr2"/>
</dbReference>
<dbReference type="VEuPathDB" id="HostDB:ENSMUSG00000011171"/>
<dbReference type="eggNOG" id="KOG4564">
    <property type="taxonomic scope" value="Eukaryota"/>
</dbReference>
<dbReference type="GeneTree" id="ENSGT00940000158089"/>
<dbReference type="HOGENOM" id="CLU_002753_4_4_1"/>
<dbReference type="InParanoid" id="P41588"/>
<dbReference type="OMA" id="IWIITRV"/>
<dbReference type="OrthoDB" id="5967113at2759"/>
<dbReference type="PhylomeDB" id="P41588"/>
<dbReference type="TreeFam" id="TF315710"/>
<dbReference type="Reactome" id="R-MMU-418555">
    <property type="pathway name" value="G alpha (s) signalling events"/>
</dbReference>
<dbReference type="Reactome" id="R-MMU-420092">
    <property type="pathway name" value="Glucagon-type ligand receptors"/>
</dbReference>
<dbReference type="BioGRID-ORCS" id="22355">
    <property type="hits" value="3 hits in 75 CRISPR screens"/>
</dbReference>
<dbReference type="PRO" id="PR:P41588"/>
<dbReference type="Proteomes" id="UP000000589">
    <property type="component" value="Chromosome 12"/>
</dbReference>
<dbReference type="RNAct" id="P41588">
    <property type="molecule type" value="protein"/>
</dbReference>
<dbReference type="Bgee" id="ENSMUSG00000011171">
    <property type="expression patterns" value="Expressed in retinal neural layer and 62 other cell types or tissues"/>
</dbReference>
<dbReference type="ExpressionAtlas" id="P41588">
    <property type="expression patterns" value="baseline and differential"/>
</dbReference>
<dbReference type="GO" id="GO:0005886">
    <property type="term" value="C:plasma membrane"/>
    <property type="evidence" value="ECO:0007669"/>
    <property type="project" value="UniProtKB-SubCell"/>
</dbReference>
<dbReference type="GO" id="GO:0001634">
    <property type="term" value="F:pituitary adenylate cyclase-activating polypeptide receptor activity"/>
    <property type="evidence" value="ECO:0000250"/>
    <property type="project" value="UniProtKB"/>
</dbReference>
<dbReference type="GO" id="GO:0004999">
    <property type="term" value="F:vasoactive intestinal polypeptide receptor activity"/>
    <property type="evidence" value="ECO:0007669"/>
    <property type="project" value="Ensembl"/>
</dbReference>
<dbReference type="GO" id="GO:0007189">
    <property type="term" value="P:adenylate cyclase-activating G protein-coupled receptor signaling pathway"/>
    <property type="evidence" value="ECO:0000250"/>
    <property type="project" value="UniProtKB"/>
</dbReference>
<dbReference type="GO" id="GO:0007166">
    <property type="term" value="P:cell surface receptor signaling pathway"/>
    <property type="evidence" value="ECO:0007669"/>
    <property type="project" value="InterPro"/>
</dbReference>
<dbReference type="CDD" id="cd15986">
    <property type="entry name" value="7tmB1_VIP-R2"/>
    <property type="match status" value="1"/>
</dbReference>
<dbReference type="FunFam" id="1.20.1070.10:FF:000032">
    <property type="entry name" value="Vasoactive intestinal polypeptide receptor 1"/>
    <property type="match status" value="1"/>
</dbReference>
<dbReference type="FunFam" id="4.10.1240.10:FF:000015">
    <property type="entry name" value="Vasoactive intestinal polypeptide receptor 2"/>
    <property type="match status" value="1"/>
</dbReference>
<dbReference type="Gene3D" id="4.10.1240.10">
    <property type="entry name" value="GPCR, family 2, extracellular hormone receptor domain"/>
    <property type="match status" value="1"/>
</dbReference>
<dbReference type="Gene3D" id="1.20.1070.10">
    <property type="entry name" value="Rhodopsin 7-helix transmembrane proteins"/>
    <property type="match status" value="1"/>
</dbReference>
<dbReference type="InterPro" id="IPR050332">
    <property type="entry name" value="GPCR_2"/>
</dbReference>
<dbReference type="InterPro" id="IPR017981">
    <property type="entry name" value="GPCR_2-like_7TM"/>
</dbReference>
<dbReference type="InterPro" id="IPR036445">
    <property type="entry name" value="GPCR_2_extracell_dom_sf"/>
</dbReference>
<dbReference type="InterPro" id="IPR001879">
    <property type="entry name" value="GPCR_2_extracellular_dom"/>
</dbReference>
<dbReference type="InterPro" id="IPR000832">
    <property type="entry name" value="GPCR_2_secretin-like"/>
</dbReference>
<dbReference type="InterPro" id="IPR017983">
    <property type="entry name" value="GPCR_2_secretin-like_CS"/>
</dbReference>
<dbReference type="InterPro" id="IPR001571">
    <property type="entry name" value="GPCR_2_VIP_rcpt"/>
</dbReference>
<dbReference type="InterPro" id="IPR002284">
    <property type="entry name" value="GPCR_2_VIP_rcpt_2"/>
</dbReference>
<dbReference type="InterPro" id="IPR047035">
    <property type="entry name" value="VIP-R2_7TM"/>
</dbReference>
<dbReference type="PANTHER" id="PTHR45620">
    <property type="entry name" value="PDF RECEPTOR-LIKE PROTEIN-RELATED"/>
    <property type="match status" value="1"/>
</dbReference>
<dbReference type="PANTHER" id="PTHR45620:SF22">
    <property type="entry name" value="VASOACTIVE INTESTINAL POLYPEPTIDE RECEPTOR 2"/>
    <property type="match status" value="1"/>
</dbReference>
<dbReference type="Pfam" id="PF00002">
    <property type="entry name" value="7tm_2"/>
    <property type="match status" value="1"/>
</dbReference>
<dbReference type="Pfam" id="PF02793">
    <property type="entry name" value="HRM"/>
    <property type="match status" value="1"/>
</dbReference>
<dbReference type="PRINTS" id="PR00249">
    <property type="entry name" value="GPCRSECRETIN"/>
</dbReference>
<dbReference type="PRINTS" id="PR00491">
    <property type="entry name" value="VASOACTVEIPR"/>
</dbReference>
<dbReference type="PRINTS" id="PR01155">
    <property type="entry name" value="VIP2RECEPTOR"/>
</dbReference>
<dbReference type="SMART" id="SM00008">
    <property type="entry name" value="HormR"/>
    <property type="match status" value="1"/>
</dbReference>
<dbReference type="SUPFAM" id="SSF81321">
    <property type="entry name" value="Family A G protein-coupled receptor-like"/>
    <property type="match status" value="1"/>
</dbReference>
<dbReference type="SUPFAM" id="SSF111418">
    <property type="entry name" value="Hormone receptor domain"/>
    <property type="match status" value="1"/>
</dbReference>
<dbReference type="PROSITE" id="PS00649">
    <property type="entry name" value="G_PROTEIN_RECEP_F2_1"/>
    <property type="match status" value="1"/>
</dbReference>
<dbReference type="PROSITE" id="PS00650">
    <property type="entry name" value="G_PROTEIN_RECEP_F2_2"/>
    <property type="match status" value="1"/>
</dbReference>
<dbReference type="PROSITE" id="PS50227">
    <property type="entry name" value="G_PROTEIN_RECEP_F2_3"/>
    <property type="match status" value="1"/>
</dbReference>
<dbReference type="PROSITE" id="PS50261">
    <property type="entry name" value="G_PROTEIN_RECEP_F2_4"/>
    <property type="match status" value="1"/>
</dbReference>
<comment type="function">
    <text evidence="1">G protein-coupled receptor activated by the neuropeptides vasoactive intestinal peptide (VIP) and pituitary adenylate cyclase-activating polypeptide (ADCYAP1/PACAP). Binds VIP and both PACAP27 and PACAP38 bioactive peptides with the order of ligand affinity of VIP = PACAP38 &gt; PACAP27. Ligand binding causes a conformation change that triggers signaling via guanine nucleotide-binding proteins (G proteins) and modulates the activity of downstream effectors. Activates cAMP-dependent pathway (By similarity). May be coupled to phospholipase C.</text>
</comment>
<comment type="subunit">
    <text evidence="1">Interacts with ADCYAP1/PACAP (via N-terminal extracellular domain); activated by PACAP27 and CAPAC38 neuropeptides. Interacts with VIP; the interaction results in VIPR1 activation.</text>
</comment>
<comment type="subcellular location">
    <subcellularLocation>
        <location>Cell membrane</location>
        <topology evidence="1">Multi-pass membrane protein</topology>
    </subcellularLocation>
</comment>
<comment type="tissue specificity">
    <text>Expressed at high levels in the MIN6 cells, at moderate levels in pancreatic islets, insulin-secreting cells, lung, brain, stomach, and colon, and at low levels in the heart.</text>
</comment>
<comment type="similarity">
    <text evidence="3">Belongs to the G-protein coupled receptor 2 family.</text>
</comment>
<organism>
    <name type="scientific">Mus musculus</name>
    <name type="common">Mouse</name>
    <dbReference type="NCBI Taxonomy" id="10090"/>
    <lineage>
        <taxon>Eukaryota</taxon>
        <taxon>Metazoa</taxon>
        <taxon>Chordata</taxon>
        <taxon>Craniata</taxon>
        <taxon>Vertebrata</taxon>
        <taxon>Euteleostomi</taxon>
        <taxon>Mammalia</taxon>
        <taxon>Eutheria</taxon>
        <taxon>Euarchontoglires</taxon>
        <taxon>Glires</taxon>
        <taxon>Rodentia</taxon>
        <taxon>Myomorpha</taxon>
        <taxon>Muroidea</taxon>
        <taxon>Muridae</taxon>
        <taxon>Murinae</taxon>
        <taxon>Mus</taxon>
        <taxon>Mus</taxon>
    </lineage>
</organism>
<keyword id="KW-1003">Cell membrane</keyword>
<keyword id="KW-1015">Disulfide bond</keyword>
<keyword id="KW-0297">G-protein coupled receptor</keyword>
<keyword id="KW-0325">Glycoprotein</keyword>
<keyword id="KW-0472">Membrane</keyword>
<keyword id="KW-0675">Receptor</keyword>
<keyword id="KW-1185">Reference proteome</keyword>
<keyword id="KW-0732">Signal</keyword>
<keyword id="KW-0807">Transducer</keyword>
<keyword id="KW-0812">Transmembrane</keyword>
<keyword id="KW-1133">Transmembrane helix</keyword>
<reference key="1">
    <citation type="journal article" date="1994" name="Proc. Natl. Acad. Sci. U.S.A.">
        <title>Cloning and functional characterization of a third pituitary adenylate cyclase-activating polypeptide receptor subtype expressed in insulin-secreting cells.</title>
        <authorList>
            <person name="Inagaki N."/>
            <person name="Yoshida H."/>
            <person name="Mizuta M."/>
            <person name="Mizuno N."/>
            <person name="Fujii Y."/>
            <person name="Gonoi T."/>
            <person name="Miyazaki J."/>
            <person name="Seino S."/>
        </authorList>
    </citation>
    <scope>NUCLEOTIDE SEQUENCE [MRNA]</scope>
    <source>
        <strain>C57BL/6J</strain>
    </source>
</reference>
<reference key="2">
    <citation type="journal article" date="1996" name="J. Neuroimmunol.">
        <title>Differential expression of vasoactive intestinal peptide receptors 1 and 2 (VIP-R1 and VIP-R2) mRNA in murine lymphocytes.</title>
        <authorList>
            <person name="Delgado M."/>
            <person name="Martinez C."/>
            <person name="Johnson M.C."/>
            <person name="Gomariz R.P."/>
            <person name="Ganea D."/>
        </authorList>
    </citation>
    <scope>NUCLEOTIDE SEQUENCE [GENOMIC DNA] OF 149-407</scope>
    <source>
        <strain>BALB/cJ</strain>
        <tissue>Thymus</tissue>
    </source>
</reference>
<reference key="3">
    <citation type="journal article" date="2006" name="Biochemistry">
        <title>Endogenously nitrated proteins in mouse brain: links to neurodegenerative disease.</title>
        <authorList>
            <person name="Sacksteder C.A."/>
            <person name="Qian W.-J."/>
            <person name="Knyushko T.V."/>
            <person name="Wang H."/>
            <person name="Chin M.H."/>
            <person name="Lacan G."/>
            <person name="Melega W.P."/>
            <person name="Camp D.G. II"/>
            <person name="Smith R.D."/>
            <person name="Smith D.J."/>
            <person name="Squier T.C."/>
            <person name="Bigelow D.J."/>
        </authorList>
    </citation>
    <scope>IDENTIFICATION BY MASS SPECTROMETRY [LARGE SCALE ANALYSIS]</scope>
    <source>
        <tissue>Brain</tissue>
    </source>
</reference>